<name>SPED_HELMI</name>
<gene>
    <name evidence="1" type="primary">speD</name>
    <name type="ordered locus">Helmi_08870</name>
    <name type="ORF">HM1_1062</name>
</gene>
<protein>
    <recommendedName>
        <fullName evidence="1">S-adenosylmethionine decarboxylase proenzyme</fullName>
        <shortName evidence="1">AdoMetDC</shortName>
        <shortName evidence="1">SAMDC</shortName>
        <ecNumber evidence="1">4.1.1.50</ecNumber>
    </recommendedName>
    <component>
        <recommendedName>
            <fullName evidence="1">S-adenosylmethionine decarboxylase beta chain</fullName>
        </recommendedName>
    </component>
    <component>
        <recommendedName>
            <fullName evidence="1">S-adenosylmethionine decarboxylase alpha chain</fullName>
        </recommendedName>
    </component>
</protein>
<sequence>MEIKSIKKLKLYGFNNLTKTLSFNMYDICYAKTPEHRKAYIEYIDEEYNSERLTNILIEVANIIGANILNIAKQDYDPQGASVTMLISEGKVEQDVENGQGNGNAIGSATDCDNGDGKAGEDCALLIPNAVAAHLDKSHITVHTYPESHPDKGISTFRADIDVSTCGMISPLKALNYLINSFSSDIVIADYRVRGFTRDVSGKKYFIDHKINSIQNYIAKETRELYQMIDVNVYQDNIFHTKMLLKEFDLDNYLFGTAKKELLPGEKKKIKQRLKKEMYEIFSGRNIPKV</sequence>
<organism>
    <name type="scientific">Heliobacterium modesticaldum (strain ATCC 51547 / Ice1)</name>
    <dbReference type="NCBI Taxonomy" id="498761"/>
    <lineage>
        <taxon>Bacteria</taxon>
        <taxon>Bacillati</taxon>
        <taxon>Bacillota</taxon>
        <taxon>Clostridia</taxon>
        <taxon>Eubacteriales</taxon>
        <taxon>Heliobacteriaceae</taxon>
        <taxon>Heliomicrobium</taxon>
    </lineage>
</organism>
<dbReference type="EC" id="4.1.1.50" evidence="1"/>
<dbReference type="EMBL" id="CP000930">
    <property type="protein sequence ID" value="ABZ83512.1"/>
    <property type="molecule type" value="Genomic_DNA"/>
</dbReference>
<dbReference type="RefSeq" id="WP_012282041.1">
    <property type="nucleotide sequence ID" value="NC_010337.2"/>
</dbReference>
<dbReference type="STRING" id="498761.HM1_1062"/>
<dbReference type="KEGG" id="hmo:HM1_1062"/>
<dbReference type="eggNOG" id="COG1586">
    <property type="taxonomic scope" value="Bacteria"/>
</dbReference>
<dbReference type="HOGENOM" id="CLU_092007_0_0_9"/>
<dbReference type="OrthoDB" id="5290709at2"/>
<dbReference type="UniPathway" id="UPA00331">
    <property type="reaction ID" value="UER00451"/>
</dbReference>
<dbReference type="Proteomes" id="UP000008550">
    <property type="component" value="Chromosome"/>
</dbReference>
<dbReference type="GO" id="GO:0005829">
    <property type="term" value="C:cytosol"/>
    <property type="evidence" value="ECO:0007669"/>
    <property type="project" value="TreeGrafter"/>
</dbReference>
<dbReference type="GO" id="GO:0004014">
    <property type="term" value="F:adenosylmethionine decarboxylase activity"/>
    <property type="evidence" value="ECO:0007669"/>
    <property type="project" value="UniProtKB-UniRule"/>
</dbReference>
<dbReference type="GO" id="GO:0008295">
    <property type="term" value="P:spermidine biosynthetic process"/>
    <property type="evidence" value="ECO:0007669"/>
    <property type="project" value="UniProtKB-UniRule"/>
</dbReference>
<dbReference type="Gene3D" id="3.60.90.10">
    <property type="entry name" value="S-adenosylmethionine decarboxylase"/>
    <property type="match status" value="1"/>
</dbReference>
<dbReference type="HAMAP" id="MF_00465">
    <property type="entry name" value="AdoMetDC_2"/>
    <property type="match status" value="1"/>
</dbReference>
<dbReference type="InterPro" id="IPR003826">
    <property type="entry name" value="AdoMetDC_fam_prok"/>
</dbReference>
<dbReference type="InterPro" id="IPR009165">
    <property type="entry name" value="S-AdoMet_deCO2ase_bac"/>
</dbReference>
<dbReference type="InterPro" id="IPR016067">
    <property type="entry name" value="S-AdoMet_deCO2ase_core"/>
</dbReference>
<dbReference type="NCBIfam" id="TIGR03331">
    <property type="entry name" value="SAM_DCase_Eco"/>
    <property type="match status" value="1"/>
</dbReference>
<dbReference type="PANTHER" id="PTHR33866">
    <property type="entry name" value="S-ADENOSYLMETHIONINE DECARBOXYLASE PROENZYME"/>
    <property type="match status" value="1"/>
</dbReference>
<dbReference type="PANTHER" id="PTHR33866:SF1">
    <property type="entry name" value="S-ADENOSYLMETHIONINE DECARBOXYLASE PROENZYME"/>
    <property type="match status" value="1"/>
</dbReference>
<dbReference type="Pfam" id="PF02675">
    <property type="entry name" value="AdoMet_dc"/>
    <property type="match status" value="1"/>
</dbReference>
<dbReference type="PIRSF" id="PIRSF001356">
    <property type="entry name" value="SAM_decarboxylas"/>
    <property type="match status" value="1"/>
</dbReference>
<dbReference type="SUPFAM" id="SSF56276">
    <property type="entry name" value="S-adenosylmethionine decarboxylase"/>
    <property type="match status" value="1"/>
</dbReference>
<keyword id="KW-0068">Autocatalytic cleavage</keyword>
<keyword id="KW-0210">Decarboxylase</keyword>
<keyword id="KW-0456">Lyase</keyword>
<keyword id="KW-0620">Polyamine biosynthesis</keyword>
<keyword id="KW-0670">Pyruvate</keyword>
<keyword id="KW-1185">Reference proteome</keyword>
<keyword id="KW-0949">S-adenosyl-L-methionine</keyword>
<keyword id="KW-0704">Schiff base</keyword>
<keyword id="KW-0745">Spermidine biosynthesis</keyword>
<keyword id="KW-0865">Zymogen</keyword>
<comment type="function">
    <text evidence="1">Catalyzes the decarboxylation of S-adenosylmethionine to S-adenosylmethioninamine (dcAdoMet), the propylamine donor required for the synthesis of the polyamines spermine and spermidine from the diamine putrescine.</text>
</comment>
<comment type="catalytic activity">
    <reaction evidence="1">
        <text>S-adenosyl-L-methionine + H(+) = S-adenosyl 3-(methylsulfanyl)propylamine + CO2</text>
        <dbReference type="Rhea" id="RHEA:15981"/>
        <dbReference type="ChEBI" id="CHEBI:15378"/>
        <dbReference type="ChEBI" id="CHEBI:16526"/>
        <dbReference type="ChEBI" id="CHEBI:57443"/>
        <dbReference type="ChEBI" id="CHEBI:59789"/>
        <dbReference type="EC" id="4.1.1.50"/>
    </reaction>
</comment>
<comment type="cofactor">
    <cofactor evidence="1">
        <name>pyruvate</name>
        <dbReference type="ChEBI" id="CHEBI:15361"/>
    </cofactor>
    <text evidence="1">Binds 1 pyruvoyl group covalently per subunit.</text>
</comment>
<comment type="pathway">
    <text evidence="1">Amine and polyamine biosynthesis; S-adenosylmethioninamine biosynthesis; S-adenosylmethioninamine from S-adenosyl-L-methionine: step 1/1.</text>
</comment>
<comment type="subunit">
    <text evidence="1">Heterooctamer of four alpha and four beta chains arranged as a tetramer of alpha/beta heterodimers.</text>
</comment>
<comment type="PTM">
    <text evidence="1">Is synthesized initially as an inactive proenzyme. Formation of the active enzyme involves a self-maturation process in which the active site pyruvoyl group is generated from an internal serine residue via an autocatalytic post-translational modification. Two non-identical subunits are generated from the proenzyme in this reaction, and the pyruvate is formed at the N-terminus of the alpha chain, which is derived from the carboxyl end of the proenzyme. The post-translation cleavage follows an unusual pathway, termed non-hydrolytic serinolysis, in which the side chain hydroxyl group of the serine supplies its oxygen atom to form the C-terminus of the beta chain, while the remainder of the serine residue undergoes an oxidative deamination to produce ammonia and the pyruvoyl group blocking the N-terminus of the alpha chain.</text>
</comment>
<comment type="similarity">
    <text evidence="1">Belongs to the prokaryotic AdoMetDC family. Type 2 subfamily.</text>
</comment>
<accession>B0TI92</accession>
<feature type="chain" id="PRO_0000364385" description="S-adenosylmethionine decarboxylase beta chain" evidence="1">
    <location>
        <begin position="1"/>
        <end position="137"/>
    </location>
</feature>
<feature type="chain" id="PRO_0000364386" description="S-adenosylmethionine decarboxylase alpha chain" evidence="1">
    <location>
        <begin position="138"/>
        <end position="290"/>
    </location>
</feature>
<feature type="active site" description="Schiff-base intermediate with substrate; via pyruvic acid" evidence="1">
    <location>
        <position position="138"/>
    </location>
</feature>
<feature type="active site" description="Proton acceptor; for processing activity" evidence="1">
    <location>
        <position position="143"/>
    </location>
</feature>
<feature type="active site" description="Proton donor; for catalytic activity" evidence="1">
    <location>
        <position position="166"/>
    </location>
</feature>
<feature type="site" description="Cleavage (non-hydrolytic); by autolysis" evidence="1">
    <location>
        <begin position="137"/>
        <end position="138"/>
    </location>
</feature>
<feature type="modified residue" description="Pyruvic acid (Ser); by autocatalysis" evidence="1">
    <location>
        <position position="138"/>
    </location>
</feature>
<reference key="1">
    <citation type="journal article" date="2008" name="J. Bacteriol.">
        <title>The genome of Heliobacterium modesticaldum, a phototrophic representative of the Firmicutes containing the simplest photosynthetic apparatus.</title>
        <authorList>
            <person name="Sattley W.M."/>
            <person name="Madigan M.T."/>
            <person name="Swingley W.D."/>
            <person name="Cheung P.C."/>
            <person name="Clocksin K.M."/>
            <person name="Conrad A.L."/>
            <person name="Dejesa L.C."/>
            <person name="Honchak B.M."/>
            <person name="Jung D.O."/>
            <person name="Karbach L.E."/>
            <person name="Kurdoglu A."/>
            <person name="Lahiri S."/>
            <person name="Mastrian S.D."/>
            <person name="Page L.E."/>
            <person name="Taylor H.L."/>
            <person name="Wang Z.T."/>
            <person name="Raymond J."/>
            <person name="Chen M."/>
            <person name="Blankenship R.E."/>
            <person name="Touchman J.W."/>
        </authorList>
    </citation>
    <scope>NUCLEOTIDE SEQUENCE [LARGE SCALE GENOMIC DNA]</scope>
    <source>
        <strain>ATCC 51547 / Ice1</strain>
    </source>
</reference>
<evidence type="ECO:0000255" key="1">
    <source>
        <dbReference type="HAMAP-Rule" id="MF_00465"/>
    </source>
</evidence>
<proteinExistence type="inferred from homology"/>